<sequence length="95" mass="11041">MAISRSEVEHVAKLARLKFSQEEIEEFTVQLSKIIDYVNKLNELDTENVEPTAHIVPIHNVFREDEVKPSMDRDKILMNAPYKENGCFKVPKIIE</sequence>
<dbReference type="EC" id="6.3.5.-" evidence="1"/>
<dbReference type="EMBL" id="CP000923">
    <property type="protein sequence ID" value="ABY91847.1"/>
    <property type="molecule type" value="Genomic_DNA"/>
</dbReference>
<dbReference type="RefSeq" id="WP_003868770.1">
    <property type="nucleotide sequence ID" value="NC_010320.1"/>
</dbReference>
<dbReference type="SMR" id="B0K3S2"/>
<dbReference type="KEGG" id="tex:Teth514_0539"/>
<dbReference type="HOGENOM" id="CLU_105899_1_2_9"/>
<dbReference type="Proteomes" id="UP000002155">
    <property type="component" value="Chromosome"/>
</dbReference>
<dbReference type="GO" id="GO:0050566">
    <property type="term" value="F:asparaginyl-tRNA synthase (glutamine-hydrolyzing) activity"/>
    <property type="evidence" value="ECO:0007669"/>
    <property type="project" value="RHEA"/>
</dbReference>
<dbReference type="GO" id="GO:0005524">
    <property type="term" value="F:ATP binding"/>
    <property type="evidence" value="ECO:0007669"/>
    <property type="project" value="UniProtKB-KW"/>
</dbReference>
<dbReference type="GO" id="GO:0050567">
    <property type="term" value="F:glutaminyl-tRNA synthase (glutamine-hydrolyzing) activity"/>
    <property type="evidence" value="ECO:0007669"/>
    <property type="project" value="UniProtKB-UniRule"/>
</dbReference>
<dbReference type="GO" id="GO:0070681">
    <property type="term" value="P:glutaminyl-tRNAGln biosynthesis via transamidation"/>
    <property type="evidence" value="ECO:0007669"/>
    <property type="project" value="TreeGrafter"/>
</dbReference>
<dbReference type="GO" id="GO:0006450">
    <property type="term" value="P:regulation of translational fidelity"/>
    <property type="evidence" value="ECO:0007669"/>
    <property type="project" value="InterPro"/>
</dbReference>
<dbReference type="GO" id="GO:0006412">
    <property type="term" value="P:translation"/>
    <property type="evidence" value="ECO:0007669"/>
    <property type="project" value="UniProtKB-UniRule"/>
</dbReference>
<dbReference type="Gene3D" id="1.10.20.60">
    <property type="entry name" value="Glu-tRNAGln amidotransferase C subunit, N-terminal domain"/>
    <property type="match status" value="1"/>
</dbReference>
<dbReference type="HAMAP" id="MF_00122">
    <property type="entry name" value="GatC"/>
    <property type="match status" value="1"/>
</dbReference>
<dbReference type="InterPro" id="IPR036113">
    <property type="entry name" value="Asp/Glu-ADT_sf_sub_c"/>
</dbReference>
<dbReference type="InterPro" id="IPR003837">
    <property type="entry name" value="GatC"/>
</dbReference>
<dbReference type="NCBIfam" id="TIGR00135">
    <property type="entry name" value="gatC"/>
    <property type="match status" value="1"/>
</dbReference>
<dbReference type="PANTHER" id="PTHR15004">
    <property type="entry name" value="GLUTAMYL-TRNA(GLN) AMIDOTRANSFERASE SUBUNIT C, MITOCHONDRIAL"/>
    <property type="match status" value="1"/>
</dbReference>
<dbReference type="PANTHER" id="PTHR15004:SF0">
    <property type="entry name" value="GLUTAMYL-TRNA(GLN) AMIDOTRANSFERASE SUBUNIT C, MITOCHONDRIAL"/>
    <property type="match status" value="1"/>
</dbReference>
<dbReference type="Pfam" id="PF02686">
    <property type="entry name" value="GatC"/>
    <property type="match status" value="1"/>
</dbReference>
<dbReference type="SUPFAM" id="SSF141000">
    <property type="entry name" value="Glu-tRNAGln amidotransferase C subunit"/>
    <property type="match status" value="1"/>
</dbReference>
<name>GATC_THEPX</name>
<comment type="function">
    <text evidence="1">Allows the formation of correctly charged Asn-tRNA(Asn) or Gln-tRNA(Gln) through the transamidation of misacylated Asp-tRNA(Asn) or Glu-tRNA(Gln) in organisms which lack either or both of asparaginyl-tRNA or glutaminyl-tRNA synthetases. The reaction takes place in the presence of glutamine and ATP through an activated phospho-Asp-tRNA(Asn) or phospho-Glu-tRNA(Gln).</text>
</comment>
<comment type="catalytic activity">
    <reaction evidence="1">
        <text>L-glutamyl-tRNA(Gln) + L-glutamine + ATP + H2O = L-glutaminyl-tRNA(Gln) + L-glutamate + ADP + phosphate + H(+)</text>
        <dbReference type="Rhea" id="RHEA:17521"/>
        <dbReference type="Rhea" id="RHEA-COMP:9681"/>
        <dbReference type="Rhea" id="RHEA-COMP:9684"/>
        <dbReference type="ChEBI" id="CHEBI:15377"/>
        <dbReference type="ChEBI" id="CHEBI:15378"/>
        <dbReference type="ChEBI" id="CHEBI:29985"/>
        <dbReference type="ChEBI" id="CHEBI:30616"/>
        <dbReference type="ChEBI" id="CHEBI:43474"/>
        <dbReference type="ChEBI" id="CHEBI:58359"/>
        <dbReference type="ChEBI" id="CHEBI:78520"/>
        <dbReference type="ChEBI" id="CHEBI:78521"/>
        <dbReference type="ChEBI" id="CHEBI:456216"/>
    </reaction>
</comment>
<comment type="catalytic activity">
    <reaction evidence="1">
        <text>L-aspartyl-tRNA(Asn) + L-glutamine + ATP + H2O = L-asparaginyl-tRNA(Asn) + L-glutamate + ADP + phosphate + 2 H(+)</text>
        <dbReference type="Rhea" id="RHEA:14513"/>
        <dbReference type="Rhea" id="RHEA-COMP:9674"/>
        <dbReference type="Rhea" id="RHEA-COMP:9677"/>
        <dbReference type="ChEBI" id="CHEBI:15377"/>
        <dbReference type="ChEBI" id="CHEBI:15378"/>
        <dbReference type="ChEBI" id="CHEBI:29985"/>
        <dbReference type="ChEBI" id="CHEBI:30616"/>
        <dbReference type="ChEBI" id="CHEBI:43474"/>
        <dbReference type="ChEBI" id="CHEBI:58359"/>
        <dbReference type="ChEBI" id="CHEBI:78515"/>
        <dbReference type="ChEBI" id="CHEBI:78516"/>
        <dbReference type="ChEBI" id="CHEBI:456216"/>
    </reaction>
</comment>
<comment type="subunit">
    <text evidence="1">Heterotrimer of A, B and C subunits.</text>
</comment>
<comment type="similarity">
    <text evidence="1">Belongs to the GatC family.</text>
</comment>
<evidence type="ECO:0000255" key="1">
    <source>
        <dbReference type="HAMAP-Rule" id="MF_00122"/>
    </source>
</evidence>
<gene>
    <name evidence="1" type="primary">gatC</name>
    <name type="ordered locus">Teth514_0539</name>
</gene>
<protein>
    <recommendedName>
        <fullName evidence="1">Aspartyl/glutamyl-tRNA(Asn/Gln) amidotransferase subunit C</fullName>
        <shortName evidence="1">Asp/Glu-ADT subunit C</shortName>
        <ecNumber evidence="1">6.3.5.-</ecNumber>
    </recommendedName>
</protein>
<feature type="chain" id="PRO_1000095322" description="Aspartyl/glutamyl-tRNA(Asn/Gln) amidotransferase subunit C">
    <location>
        <begin position="1"/>
        <end position="95"/>
    </location>
</feature>
<accession>B0K3S2</accession>
<reference key="1">
    <citation type="submission" date="2008-01" db="EMBL/GenBank/DDBJ databases">
        <title>Complete sequence of Thermoanaerobacter sp. X514.</title>
        <authorList>
            <consortium name="US DOE Joint Genome Institute"/>
            <person name="Copeland A."/>
            <person name="Lucas S."/>
            <person name="Lapidus A."/>
            <person name="Barry K."/>
            <person name="Glavina del Rio T."/>
            <person name="Dalin E."/>
            <person name="Tice H."/>
            <person name="Pitluck S."/>
            <person name="Bruce D."/>
            <person name="Goodwin L."/>
            <person name="Saunders E."/>
            <person name="Brettin T."/>
            <person name="Detter J.C."/>
            <person name="Han C."/>
            <person name="Schmutz J."/>
            <person name="Larimer F."/>
            <person name="Land M."/>
            <person name="Hauser L."/>
            <person name="Kyrpides N."/>
            <person name="Kim E."/>
            <person name="Hemme C."/>
            <person name="Fields M.W."/>
            <person name="He Z."/>
            <person name="Zhou J."/>
            <person name="Richardson P."/>
        </authorList>
    </citation>
    <scope>NUCLEOTIDE SEQUENCE [LARGE SCALE GENOMIC DNA]</scope>
    <source>
        <strain>X514</strain>
    </source>
</reference>
<organism>
    <name type="scientific">Thermoanaerobacter sp. (strain X514)</name>
    <dbReference type="NCBI Taxonomy" id="399726"/>
    <lineage>
        <taxon>Bacteria</taxon>
        <taxon>Bacillati</taxon>
        <taxon>Bacillota</taxon>
        <taxon>Clostridia</taxon>
        <taxon>Thermoanaerobacterales</taxon>
        <taxon>Thermoanaerobacteraceae</taxon>
        <taxon>Thermoanaerobacter</taxon>
    </lineage>
</organism>
<proteinExistence type="inferred from homology"/>
<keyword id="KW-0067">ATP-binding</keyword>
<keyword id="KW-0436">Ligase</keyword>
<keyword id="KW-0547">Nucleotide-binding</keyword>
<keyword id="KW-0648">Protein biosynthesis</keyword>